<sequence>MVKKIGVLTSGGDAPGMNAAIRGVVRAALSAGLDVFGIEDGYLGLYENRMKKLDRYSVSDMINRGGTFLGSARFPEFRDPEVRKVALKNMHERGIDGLVVIGGDGSYAGADLLTKEGGIHCVGLPGTIDNDVAGTDYTIGFFTALETVVEAIDRLRDTSSSHQRISIVEVMGRYCGDLTLAAAIAGGCEFIAIPEVEFKRDDLVAEIKAGIAKGKKHAIVAITEKLDDIDSLAKYIEKETGRETRGTVLGHIQRGGAPVAYDRILASRMGAYAVDLLLQDHDYKKGGFCVGVQNEKMVHELISVCIAPENKKSKFKEDWYDTAKKLF</sequence>
<evidence type="ECO:0000255" key="1">
    <source>
        <dbReference type="HAMAP-Rule" id="MF_00339"/>
    </source>
</evidence>
<feature type="chain" id="PRO_0000112009" description="ATP-dependent 6-phosphofructokinase">
    <location>
        <begin position="1"/>
        <end position="327"/>
    </location>
</feature>
<feature type="active site" description="Proton acceptor" evidence="1">
    <location>
        <position position="129"/>
    </location>
</feature>
<feature type="binding site" evidence="1">
    <location>
        <position position="12"/>
    </location>
    <ligand>
        <name>ATP</name>
        <dbReference type="ChEBI" id="CHEBI:30616"/>
    </ligand>
</feature>
<feature type="binding site" evidence="1">
    <location>
        <begin position="22"/>
        <end position="26"/>
    </location>
    <ligand>
        <name>ADP</name>
        <dbReference type="ChEBI" id="CHEBI:456216"/>
        <note>allosteric activator; ligand shared between dimeric partners</note>
    </ligand>
</feature>
<feature type="binding site" evidence="1">
    <location>
        <begin position="55"/>
        <end position="60"/>
    </location>
    <ligand>
        <name>ADP</name>
        <dbReference type="ChEBI" id="CHEBI:456216"/>
        <note>allosteric activator; ligand shared between dimeric partners</note>
    </ligand>
</feature>
<feature type="binding site" evidence="1">
    <location>
        <begin position="73"/>
        <end position="74"/>
    </location>
    <ligand>
        <name>ATP</name>
        <dbReference type="ChEBI" id="CHEBI:30616"/>
    </ligand>
</feature>
<feature type="binding site" evidence="1">
    <location>
        <begin position="103"/>
        <end position="106"/>
    </location>
    <ligand>
        <name>ATP</name>
        <dbReference type="ChEBI" id="CHEBI:30616"/>
    </ligand>
</feature>
<feature type="binding site" evidence="1">
    <location>
        <position position="104"/>
    </location>
    <ligand>
        <name>Mg(2+)</name>
        <dbReference type="ChEBI" id="CHEBI:18420"/>
        <note>catalytic</note>
    </ligand>
</feature>
<feature type="binding site" description="in other chain" evidence="1">
    <location>
        <begin position="127"/>
        <end position="129"/>
    </location>
    <ligand>
        <name>substrate</name>
        <note>ligand shared between dimeric partners</note>
    </ligand>
</feature>
<feature type="binding site" description="in other chain" evidence="1">
    <location>
        <position position="156"/>
    </location>
    <ligand>
        <name>ADP</name>
        <dbReference type="ChEBI" id="CHEBI:456216"/>
        <note>allosteric activator; ligand shared between dimeric partners</note>
    </ligand>
</feature>
<feature type="binding site" evidence="1">
    <location>
        <position position="164"/>
    </location>
    <ligand>
        <name>substrate</name>
        <note>ligand shared between dimeric partners</note>
    </ligand>
</feature>
<feature type="binding site" description="in other chain" evidence="1">
    <location>
        <begin position="171"/>
        <end position="173"/>
    </location>
    <ligand>
        <name>substrate</name>
        <note>ligand shared between dimeric partners</note>
    </ligand>
</feature>
<feature type="binding site" description="in other chain" evidence="1">
    <location>
        <begin position="187"/>
        <end position="189"/>
    </location>
    <ligand>
        <name>ADP</name>
        <dbReference type="ChEBI" id="CHEBI:456216"/>
        <note>allosteric activator; ligand shared between dimeric partners</note>
    </ligand>
</feature>
<feature type="binding site" description="in other chain" evidence="1">
    <location>
        <position position="213"/>
    </location>
    <ligand>
        <name>ADP</name>
        <dbReference type="ChEBI" id="CHEBI:456216"/>
        <note>allosteric activator; ligand shared between dimeric partners</note>
    </ligand>
</feature>
<feature type="binding site" description="in other chain" evidence="1">
    <location>
        <begin position="215"/>
        <end position="217"/>
    </location>
    <ligand>
        <name>ADP</name>
        <dbReference type="ChEBI" id="CHEBI:456216"/>
        <note>allosteric activator; ligand shared between dimeric partners</note>
    </ligand>
</feature>
<feature type="binding site" description="in other chain" evidence="1">
    <location>
        <position position="224"/>
    </location>
    <ligand>
        <name>substrate</name>
        <note>ligand shared between dimeric partners</note>
    </ligand>
</feature>
<feature type="binding site" evidence="1">
    <location>
        <position position="245"/>
    </location>
    <ligand>
        <name>substrate</name>
        <note>ligand shared between dimeric partners</note>
    </ligand>
</feature>
<feature type="binding site" description="in other chain" evidence="1">
    <location>
        <begin position="251"/>
        <end position="254"/>
    </location>
    <ligand>
        <name>substrate</name>
        <note>ligand shared between dimeric partners</note>
    </ligand>
</feature>
<keyword id="KW-0021">Allosteric enzyme</keyword>
<keyword id="KW-0067">ATP-binding</keyword>
<keyword id="KW-0963">Cytoplasm</keyword>
<keyword id="KW-0324">Glycolysis</keyword>
<keyword id="KW-0418">Kinase</keyword>
<keyword id="KW-0460">Magnesium</keyword>
<keyword id="KW-0479">Metal-binding</keyword>
<keyword id="KW-0547">Nucleotide-binding</keyword>
<keyword id="KW-1185">Reference proteome</keyword>
<keyword id="KW-0808">Transferase</keyword>
<reference key="1">
    <citation type="journal article" date="2001" name="Nature">
        <title>Genome sequence of Yersinia pestis, the causative agent of plague.</title>
        <authorList>
            <person name="Parkhill J."/>
            <person name="Wren B.W."/>
            <person name="Thomson N.R."/>
            <person name="Titball R.W."/>
            <person name="Holden M.T.G."/>
            <person name="Prentice M.B."/>
            <person name="Sebaihia M."/>
            <person name="James K.D."/>
            <person name="Churcher C.M."/>
            <person name="Mungall K.L."/>
            <person name="Baker S."/>
            <person name="Basham D."/>
            <person name="Bentley S.D."/>
            <person name="Brooks K."/>
            <person name="Cerdeno-Tarraga A.-M."/>
            <person name="Chillingworth T."/>
            <person name="Cronin A."/>
            <person name="Davies R.M."/>
            <person name="Davis P."/>
            <person name="Dougan G."/>
            <person name="Feltwell T."/>
            <person name="Hamlin N."/>
            <person name="Holroyd S."/>
            <person name="Jagels K."/>
            <person name="Karlyshev A.V."/>
            <person name="Leather S."/>
            <person name="Moule S."/>
            <person name="Oyston P.C.F."/>
            <person name="Quail M.A."/>
            <person name="Rutherford K.M."/>
            <person name="Simmonds M."/>
            <person name="Skelton J."/>
            <person name="Stevens K."/>
            <person name="Whitehead S."/>
            <person name="Barrell B.G."/>
        </authorList>
    </citation>
    <scope>NUCLEOTIDE SEQUENCE [LARGE SCALE GENOMIC DNA]</scope>
    <source>
        <strain>CO-92 / Biovar Orientalis</strain>
    </source>
</reference>
<reference key="2">
    <citation type="journal article" date="2002" name="J. Bacteriol.">
        <title>Genome sequence of Yersinia pestis KIM.</title>
        <authorList>
            <person name="Deng W."/>
            <person name="Burland V."/>
            <person name="Plunkett G. III"/>
            <person name="Boutin A."/>
            <person name="Mayhew G.F."/>
            <person name="Liss P."/>
            <person name="Perna N.T."/>
            <person name="Rose D.J."/>
            <person name="Mau B."/>
            <person name="Zhou S."/>
            <person name="Schwartz D.C."/>
            <person name="Fetherston J.D."/>
            <person name="Lindler L.E."/>
            <person name="Brubaker R.R."/>
            <person name="Plano G.V."/>
            <person name="Straley S.C."/>
            <person name="McDonough K.A."/>
            <person name="Nilles M.L."/>
            <person name="Matson J.S."/>
            <person name="Blattner F.R."/>
            <person name="Perry R.D."/>
        </authorList>
    </citation>
    <scope>NUCLEOTIDE SEQUENCE [LARGE SCALE GENOMIC DNA]</scope>
    <source>
        <strain>KIM10+ / Biovar Mediaevalis</strain>
    </source>
</reference>
<reference key="3">
    <citation type="journal article" date="2004" name="DNA Res.">
        <title>Complete genome sequence of Yersinia pestis strain 91001, an isolate avirulent to humans.</title>
        <authorList>
            <person name="Song Y."/>
            <person name="Tong Z."/>
            <person name="Wang J."/>
            <person name="Wang L."/>
            <person name="Guo Z."/>
            <person name="Han Y."/>
            <person name="Zhang J."/>
            <person name="Pei D."/>
            <person name="Zhou D."/>
            <person name="Qin H."/>
            <person name="Pang X."/>
            <person name="Han Y."/>
            <person name="Zhai J."/>
            <person name="Li M."/>
            <person name="Cui B."/>
            <person name="Qi Z."/>
            <person name="Jin L."/>
            <person name="Dai R."/>
            <person name="Chen F."/>
            <person name="Li S."/>
            <person name="Ye C."/>
            <person name="Du Z."/>
            <person name="Lin W."/>
            <person name="Wang J."/>
            <person name="Yu J."/>
            <person name="Yang H."/>
            <person name="Wang J."/>
            <person name="Huang P."/>
            <person name="Yang R."/>
        </authorList>
    </citation>
    <scope>NUCLEOTIDE SEQUENCE [LARGE SCALE GENOMIC DNA]</scope>
    <source>
        <strain>91001 / Biovar Mediaevalis</strain>
    </source>
</reference>
<accession>Q8ZJL6</accession>
<accession>Q0WKL6</accession>
<dbReference type="EC" id="2.7.1.11" evidence="1"/>
<dbReference type="EMBL" id="AL590842">
    <property type="protein sequence ID" value="CAL18767.1"/>
    <property type="molecule type" value="Genomic_DNA"/>
</dbReference>
<dbReference type="EMBL" id="AE009952">
    <property type="protein sequence ID" value="AAM83654.1"/>
    <property type="molecule type" value="Genomic_DNA"/>
</dbReference>
<dbReference type="EMBL" id="AE017042">
    <property type="protein sequence ID" value="AAS60360.1"/>
    <property type="molecule type" value="Genomic_DNA"/>
</dbReference>
<dbReference type="PIR" id="AF0010">
    <property type="entry name" value="AF0010"/>
</dbReference>
<dbReference type="RefSeq" id="WP_002208966.1">
    <property type="nucleotide sequence ID" value="NZ_WUCM01000015.1"/>
</dbReference>
<dbReference type="RefSeq" id="YP_002345172.1">
    <property type="nucleotide sequence ID" value="NC_003143.1"/>
</dbReference>
<dbReference type="SMR" id="Q8ZJL6"/>
<dbReference type="STRING" id="214092.YPO0078"/>
<dbReference type="PaxDb" id="214092-YPO0078"/>
<dbReference type="DNASU" id="1145006"/>
<dbReference type="EnsemblBacteria" id="AAS60360">
    <property type="protein sequence ID" value="AAS60360"/>
    <property type="gene ID" value="YP_0080"/>
</dbReference>
<dbReference type="GeneID" id="57974514"/>
<dbReference type="KEGG" id="ype:YPO0078"/>
<dbReference type="KEGG" id="ypk:y0059"/>
<dbReference type="KEGG" id="ypm:YP_0080"/>
<dbReference type="PATRIC" id="fig|1028802.3.peg.1875"/>
<dbReference type="eggNOG" id="COG0205">
    <property type="taxonomic scope" value="Bacteria"/>
</dbReference>
<dbReference type="HOGENOM" id="CLU_020655_0_1_6"/>
<dbReference type="OMA" id="GYQGMIE"/>
<dbReference type="OrthoDB" id="9802503at2"/>
<dbReference type="UniPathway" id="UPA00109">
    <property type="reaction ID" value="UER00182"/>
</dbReference>
<dbReference type="Proteomes" id="UP000000815">
    <property type="component" value="Chromosome"/>
</dbReference>
<dbReference type="Proteomes" id="UP000001019">
    <property type="component" value="Chromosome"/>
</dbReference>
<dbReference type="Proteomes" id="UP000002490">
    <property type="component" value="Chromosome"/>
</dbReference>
<dbReference type="GO" id="GO:0005945">
    <property type="term" value="C:6-phosphofructokinase complex"/>
    <property type="evidence" value="ECO:0000318"/>
    <property type="project" value="GO_Central"/>
</dbReference>
<dbReference type="GO" id="GO:0003872">
    <property type="term" value="F:6-phosphofructokinase activity"/>
    <property type="evidence" value="ECO:0000318"/>
    <property type="project" value="GO_Central"/>
</dbReference>
<dbReference type="GO" id="GO:0005524">
    <property type="term" value="F:ATP binding"/>
    <property type="evidence" value="ECO:0007669"/>
    <property type="project" value="UniProtKB-KW"/>
</dbReference>
<dbReference type="GO" id="GO:0070095">
    <property type="term" value="F:fructose-6-phosphate binding"/>
    <property type="evidence" value="ECO:0000318"/>
    <property type="project" value="GO_Central"/>
</dbReference>
<dbReference type="GO" id="GO:0046872">
    <property type="term" value="F:metal ion binding"/>
    <property type="evidence" value="ECO:0007669"/>
    <property type="project" value="UniProtKB-KW"/>
</dbReference>
<dbReference type="GO" id="GO:0061621">
    <property type="term" value="P:canonical glycolysis"/>
    <property type="evidence" value="ECO:0000318"/>
    <property type="project" value="GO_Central"/>
</dbReference>
<dbReference type="GO" id="GO:0030388">
    <property type="term" value="P:fructose 1,6-bisphosphate metabolic process"/>
    <property type="evidence" value="ECO:0000318"/>
    <property type="project" value="GO_Central"/>
</dbReference>
<dbReference type="GO" id="GO:0006002">
    <property type="term" value="P:fructose 6-phosphate metabolic process"/>
    <property type="evidence" value="ECO:0000318"/>
    <property type="project" value="GO_Central"/>
</dbReference>
<dbReference type="FunFam" id="3.40.50.450:FF:000001">
    <property type="entry name" value="ATP-dependent 6-phosphofructokinase"/>
    <property type="match status" value="1"/>
</dbReference>
<dbReference type="FunFam" id="3.40.50.460:FF:000002">
    <property type="entry name" value="ATP-dependent 6-phosphofructokinase"/>
    <property type="match status" value="1"/>
</dbReference>
<dbReference type="Gene3D" id="3.40.50.450">
    <property type="match status" value="1"/>
</dbReference>
<dbReference type="Gene3D" id="3.40.50.460">
    <property type="entry name" value="Phosphofructokinase domain"/>
    <property type="match status" value="1"/>
</dbReference>
<dbReference type="HAMAP" id="MF_00339">
    <property type="entry name" value="Phosphofructokinase_I_B1"/>
    <property type="match status" value="1"/>
</dbReference>
<dbReference type="InterPro" id="IPR022953">
    <property type="entry name" value="ATP_PFK"/>
</dbReference>
<dbReference type="InterPro" id="IPR012003">
    <property type="entry name" value="ATP_PFK_prok-type"/>
</dbReference>
<dbReference type="InterPro" id="IPR012828">
    <property type="entry name" value="PFKA_ATP_prok"/>
</dbReference>
<dbReference type="InterPro" id="IPR015912">
    <property type="entry name" value="Phosphofructokinase_CS"/>
</dbReference>
<dbReference type="InterPro" id="IPR000023">
    <property type="entry name" value="Phosphofructokinase_dom"/>
</dbReference>
<dbReference type="InterPro" id="IPR035966">
    <property type="entry name" value="PKF_sf"/>
</dbReference>
<dbReference type="NCBIfam" id="TIGR02482">
    <property type="entry name" value="PFKA_ATP"/>
    <property type="match status" value="1"/>
</dbReference>
<dbReference type="NCBIfam" id="NF002872">
    <property type="entry name" value="PRK03202.1"/>
    <property type="match status" value="1"/>
</dbReference>
<dbReference type="PANTHER" id="PTHR13697:SF4">
    <property type="entry name" value="ATP-DEPENDENT 6-PHOSPHOFRUCTOKINASE"/>
    <property type="match status" value="1"/>
</dbReference>
<dbReference type="PANTHER" id="PTHR13697">
    <property type="entry name" value="PHOSPHOFRUCTOKINASE"/>
    <property type="match status" value="1"/>
</dbReference>
<dbReference type="Pfam" id="PF00365">
    <property type="entry name" value="PFK"/>
    <property type="match status" value="1"/>
</dbReference>
<dbReference type="PIRSF" id="PIRSF000532">
    <property type="entry name" value="ATP_PFK_prok"/>
    <property type="match status" value="1"/>
</dbReference>
<dbReference type="PRINTS" id="PR00476">
    <property type="entry name" value="PHFRCTKINASE"/>
</dbReference>
<dbReference type="SUPFAM" id="SSF53784">
    <property type="entry name" value="Phosphofructokinase"/>
    <property type="match status" value="1"/>
</dbReference>
<dbReference type="PROSITE" id="PS00433">
    <property type="entry name" value="PHOSPHOFRUCTOKINASE"/>
    <property type="match status" value="1"/>
</dbReference>
<protein>
    <recommendedName>
        <fullName evidence="1">ATP-dependent 6-phosphofructokinase</fullName>
        <shortName evidence="1">ATP-PFK</shortName>
        <shortName evidence="1">Phosphofructokinase</shortName>
        <ecNumber evidence="1">2.7.1.11</ecNumber>
    </recommendedName>
    <alternativeName>
        <fullName evidence="1">Phosphohexokinase</fullName>
    </alternativeName>
</protein>
<comment type="function">
    <text evidence="1">Catalyzes the phosphorylation of D-fructose 6-phosphate to fructose 1,6-bisphosphate by ATP, the first committing step of glycolysis.</text>
</comment>
<comment type="catalytic activity">
    <reaction evidence="1">
        <text>beta-D-fructose 6-phosphate + ATP = beta-D-fructose 1,6-bisphosphate + ADP + H(+)</text>
        <dbReference type="Rhea" id="RHEA:16109"/>
        <dbReference type="ChEBI" id="CHEBI:15378"/>
        <dbReference type="ChEBI" id="CHEBI:30616"/>
        <dbReference type="ChEBI" id="CHEBI:32966"/>
        <dbReference type="ChEBI" id="CHEBI:57634"/>
        <dbReference type="ChEBI" id="CHEBI:456216"/>
        <dbReference type="EC" id="2.7.1.11"/>
    </reaction>
</comment>
<comment type="cofactor">
    <cofactor evidence="1">
        <name>Mg(2+)</name>
        <dbReference type="ChEBI" id="CHEBI:18420"/>
    </cofactor>
</comment>
<comment type="activity regulation">
    <text evidence="1">Allosterically activated by ADP and other diphosphonucleosides, and allosterically inhibited by phosphoenolpyruvate.</text>
</comment>
<comment type="pathway">
    <text evidence="1">Carbohydrate degradation; glycolysis; D-glyceraldehyde 3-phosphate and glycerone phosphate from D-glucose: step 3/4.</text>
</comment>
<comment type="subunit">
    <text evidence="1">Homotetramer.</text>
</comment>
<comment type="subcellular location">
    <subcellularLocation>
        <location evidence="1">Cytoplasm</location>
    </subcellularLocation>
</comment>
<comment type="similarity">
    <text evidence="1">Belongs to the phosphofructokinase type A (PFKA) family. ATP-dependent PFK group I subfamily. Prokaryotic clade 'B1' sub-subfamily.</text>
</comment>
<proteinExistence type="inferred from homology"/>
<gene>
    <name evidence="1" type="primary">pfkA</name>
    <name type="ordered locus">YPO0078</name>
    <name type="ordered locus">y0059</name>
    <name type="ordered locus">YP_0080</name>
</gene>
<name>PFKA_YERPE</name>
<organism>
    <name type="scientific">Yersinia pestis</name>
    <dbReference type="NCBI Taxonomy" id="632"/>
    <lineage>
        <taxon>Bacteria</taxon>
        <taxon>Pseudomonadati</taxon>
        <taxon>Pseudomonadota</taxon>
        <taxon>Gammaproteobacteria</taxon>
        <taxon>Enterobacterales</taxon>
        <taxon>Yersiniaceae</taxon>
        <taxon>Yersinia</taxon>
    </lineage>
</organism>